<reference key="1">
    <citation type="submission" date="2008-08" db="EMBL/GenBank/DDBJ databases">
        <title>Complete sequence of Anaeromyxobacter sp. K.</title>
        <authorList>
            <consortium name="US DOE Joint Genome Institute"/>
            <person name="Lucas S."/>
            <person name="Copeland A."/>
            <person name="Lapidus A."/>
            <person name="Glavina del Rio T."/>
            <person name="Dalin E."/>
            <person name="Tice H."/>
            <person name="Bruce D."/>
            <person name="Goodwin L."/>
            <person name="Pitluck S."/>
            <person name="Saunders E."/>
            <person name="Brettin T."/>
            <person name="Detter J.C."/>
            <person name="Han C."/>
            <person name="Larimer F."/>
            <person name="Land M."/>
            <person name="Hauser L."/>
            <person name="Kyrpides N."/>
            <person name="Ovchinnikiva G."/>
            <person name="Beliaev A."/>
        </authorList>
    </citation>
    <scope>NUCLEOTIDE SEQUENCE [LARGE SCALE GENOMIC DNA]</scope>
    <source>
        <strain>K</strain>
    </source>
</reference>
<proteinExistence type="inferred from homology"/>
<feature type="chain" id="PRO_5000390773" description="NADH-quinone oxidoreductase subunit A">
    <location>
        <begin position="1"/>
        <end position="129"/>
    </location>
</feature>
<feature type="transmembrane region" description="Helical" evidence="1">
    <location>
        <begin position="9"/>
        <end position="29"/>
    </location>
</feature>
<feature type="transmembrane region" description="Helical" evidence="1">
    <location>
        <begin position="68"/>
        <end position="88"/>
    </location>
</feature>
<feature type="transmembrane region" description="Helical" evidence="1">
    <location>
        <begin position="97"/>
        <end position="117"/>
    </location>
</feature>
<protein>
    <recommendedName>
        <fullName evidence="1">NADH-quinone oxidoreductase subunit A</fullName>
        <ecNumber evidence="1">7.1.1.-</ecNumber>
    </recommendedName>
    <alternativeName>
        <fullName evidence="1">NADH dehydrogenase I subunit A</fullName>
    </alternativeName>
    <alternativeName>
        <fullName evidence="1">NDH-1 subunit A</fullName>
    </alternativeName>
    <alternativeName>
        <fullName evidence="1">NUO1</fullName>
    </alternativeName>
</protein>
<name>NUOA_ANASK</name>
<evidence type="ECO:0000255" key="1">
    <source>
        <dbReference type="HAMAP-Rule" id="MF_01394"/>
    </source>
</evidence>
<accession>B4UIA6</accession>
<sequence length="129" mass="14182">MLTPLQIYFPIGVVLLVAVVLAFTMLGLANVLGPRRPSLVKQTPFECGSEPVGSARERFGVKFYVVALLFIVFDIEAIFLYPWAVLLLPDGQGYPGLGWPGFVSMGIFVFTLVAGLVYVWKKGVLDWAD</sequence>
<comment type="function">
    <text evidence="1">NDH-1 shuttles electrons from NADH, via FMN and iron-sulfur (Fe-S) centers, to quinones in the respiratory chain. The immediate electron acceptor for the enzyme in this species is believed to be ubiquinone. Couples the redox reaction to proton translocation (for every two electrons transferred, four hydrogen ions are translocated across the cytoplasmic membrane), and thus conserves the redox energy in a proton gradient.</text>
</comment>
<comment type="catalytic activity">
    <reaction evidence="1">
        <text>a quinone + NADH + 5 H(+)(in) = a quinol + NAD(+) + 4 H(+)(out)</text>
        <dbReference type="Rhea" id="RHEA:57888"/>
        <dbReference type="ChEBI" id="CHEBI:15378"/>
        <dbReference type="ChEBI" id="CHEBI:24646"/>
        <dbReference type="ChEBI" id="CHEBI:57540"/>
        <dbReference type="ChEBI" id="CHEBI:57945"/>
        <dbReference type="ChEBI" id="CHEBI:132124"/>
    </reaction>
</comment>
<comment type="subunit">
    <text evidence="1">NDH-1 is composed of 14 different subunits. Subunits NuoA, H, J, K, L, M, N constitute the membrane sector of the complex.</text>
</comment>
<comment type="subcellular location">
    <subcellularLocation>
        <location evidence="1">Cell inner membrane</location>
        <topology evidence="1">Multi-pass membrane protein</topology>
    </subcellularLocation>
</comment>
<comment type="similarity">
    <text evidence="1">Belongs to the complex I subunit 3 family.</text>
</comment>
<organism>
    <name type="scientific">Anaeromyxobacter sp. (strain K)</name>
    <dbReference type="NCBI Taxonomy" id="447217"/>
    <lineage>
        <taxon>Bacteria</taxon>
        <taxon>Pseudomonadati</taxon>
        <taxon>Myxococcota</taxon>
        <taxon>Myxococcia</taxon>
        <taxon>Myxococcales</taxon>
        <taxon>Cystobacterineae</taxon>
        <taxon>Anaeromyxobacteraceae</taxon>
        <taxon>Anaeromyxobacter</taxon>
    </lineage>
</organism>
<keyword id="KW-0997">Cell inner membrane</keyword>
<keyword id="KW-1003">Cell membrane</keyword>
<keyword id="KW-0472">Membrane</keyword>
<keyword id="KW-0520">NAD</keyword>
<keyword id="KW-0874">Quinone</keyword>
<keyword id="KW-1278">Translocase</keyword>
<keyword id="KW-0812">Transmembrane</keyword>
<keyword id="KW-1133">Transmembrane helix</keyword>
<keyword id="KW-0813">Transport</keyword>
<keyword id="KW-0830">Ubiquinone</keyword>
<dbReference type="EC" id="7.1.1.-" evidence="1"/>
<dbReference type="EMBL" id="CP001131">
    <property type="protein sequence ID" value="ACG72511.1"/>
    <property type="molecule type" value="Genomic_DNA"/>
</dbReference>
<dbReference type="RefSeq" id="WP_012525335.1">
    <property type="nucleotide sequence ID" value="NC_011145.1"/>
</dbReference>
<dbReference type="SMR" id="B4UIA6"/>
<dbReference type="KEGG" id="ank:AnaeK_1278"/>
<dbReference type="HOGENOM" id="CLU_119549_3_1_7"/>
<dbReference type="OrthoDB" id="9791970at2"/>
<dbReference type="Proteomes" id="UP000001871">
    <property type="component" value="Chromosome"/>
</dbReference>
<dbReference type="GO" id="GO:0030964">
    <property type="term" value="C:NADH dehydrogenase complex"/>
    <property type="evidence" value="ECO:0007669"/>
    <property type="project" value="TreeGrafter"/>
</dbReference>
<dbReference type="GO" id="GO:0005886">
    <property type="term" value="C:plasma membrane"/>
    <property type="evidence" value="ECO:0007669"/>
    <property type="project" value="UniProtKB-SubCell"/>
</dbReference>
<dbReference type="GO" id="GO:0008137">
    <property type="term" value="F:NADH dehydrogenase (ubiquinone) activity"/>
    <property type="evidence" value="ECO:0007669"/>
    <property type="project" value="InterPro"/>
</dbReference>
<dbReference type="GO" id="GO:0050136">
    <property type="term" value="F:NADH:ubiquinone reductase (non-electrogenic) activity"/>
    <property type="evidence" value="ECO:0007669"/>
    <property type="project" value="UniProtKB-UniRule"/>
</dbReference>
<dbReference type="GO" id="GO:0048038">
    <property type="term" value="F:quinone binding"/>
    <property type="evidence" value="ECO:0007669"/>
    <property type="project" value="UniProtKB-KW"/>
</dbReference>
<dbReference type="Gene3D" id="1.20.58.1610">
    <property type="entry name" value="NADH:ubiquinone/plastoquinone oxidoreductase, chain 3"/>
    <property type="match status" value="1"/>
</dbReference>
<dbReference type="HAMAP" id="MF_01394">
    <property type="entry name" value="NDH1_NuoA"/>
    <property type="match status" value="1"/>
</dbReference>
<dbReference type="InterPro" id="IPR023043">
    <property type="entry name" value="NAD(P)H_OxRDtase_bac/plastid"/>
</dbReference>
<dbReference type="InterPro" id="IPR000440">
    <property type="entry name" value="NADH_UbQ/plastoQ_OxRdtase_su3"/>
</dbReference>
<dbReference type="InterPro" id="IPR038430">
    <property type="entry name" value="NDAH_ubi_oxred_su3_sf"/>
</dbReference>
<dbReference type="PANTHER" id="PTHR11058:SF22">
    <property type="entry name" value="NADH-QUINONE OXIDOREDUCTASE SUBUNIT A"/>
    <property type="match status" value="1"/>
</dbReference>
<dbReference type="PANTHER" id="PTHR11058">
    <property type="entry name" value="NADH-UBIQUINONE OXIDOREDUCTASE CHAIN 3"/>
    <property type="match status" value="1"/>
</dbReference>
<dbReference type="Pfam" id="PF00507">
    <property type="entry name" value="Oxidored_q4"/>
    <property type="match status" value="1"/>
</dbReference>
<gene>
    <name evidence="1" type="primary">nuoA</name>
    <name type="ordered locus">AnaeK_1278</name>
</gene>